<organism>
    <name type="scientific">Cereibacter sphaeroides (strain ATCC 17025 / ATH 2.4.3)</name>
    <name type="common">Rhodobacter sphaeroides</name>
    <dbReference type="NCBI Taxonomy" id="349102"/>
    <lineage>
        <taxon>Bacteria</taxon>
        <taxon>Pseudomonadati</taxon>
        <taxon>Pseudomonadota</taxon>
        <taxon>Alphaproteobacteria</taxon>
        <taxon>Rhodobacterales</taxon>
        <taxon>Paracoccaceae</taxon>
        <taxon>Cereibacter</taxon>
    </lineage>
</organism>
<sequence>MVVGLLGGSFDPPHAGHVHISLEALKRFRLDRVWWLVSPGNPLKPRPPAPLPARLAEARRLMRHPRVVVTDIEARLGTRFTAETLAALRARYPGVRFVWLMGADNLAQFHRWDRWQGIMRTVPVGVLARPGAGLRSRTSPAARIYARARVGAADLAAARPPAWCFLNLPMVDLSSTAIRATGRWR</sequence>
<name>NADD_CERS5</name>
<protein>
    <recommendedName>
        <fullName evidence="1">Probable nicotinate-nucleotide adenylyltransferase</fullName>
        <ecNumber evidence="1">2.7.7.18</ecNumber>
    </recommendedName>
    <alternativeName>
        <fullName evidence="1">Deamido-NAD(+) diphosphorylase</fullName>
    </alternativeName>
    <alternativeName>
        <fullName evidence="1">Deamido-NAD(+) pyrophosphorylase</fullName>
    </alternativeName>
    <alternativeName>
        <fullName evidence="1">Nicotinate mononucleotide adenylyltransferase</fullName>
        <shortName evidence="1">NaMN adenylyltransferase</shortName>
    </alternativeName>
</protein>
<comment type="function">
    <text evidence="1">Catalyzes the reversible adenylation of nicotinate mononucleotide (NaMN) to nicotinic acid adenine dinucleotide (NaAD).</text>
</comment>
<comment type="catalytic activity">
    <reaction evidence="1">
        <text>nicotinate beta-D-ribonucleotide + ATP + H(+) = deamido-NAD(+) + diphosphate</text>
        <dbReference type="Rhea" id="RHEA:22860"/>
        <dbReference type="ChEBI" id="CHEBI:15378"/>
        <dbReference type="ChEBI" id="CHEBI:30616"/>
        <dbReference type="ChEBI" id="CHEBI:33019"/>
        <dbReference type="ChEBI" id="CHEBI:57502"/>
        <dbReference type="ChEBI" id="CHEBI:58437"/>
        <dbReference type="EC" id="2.7.7.18"/>
    </reaction>
</comment>
<comment type="pathway">
    <text evidence="1">Cofactor biosynthesis; NAD(+) biosynthesis; deamido-NAD(+) from nicotinate D-ribonucleotide: step 1/1.</text>
</comment>
<comment type="similarity">
    <text evidence="1">Belongs to the NadD family.</text>
</comment>
<comment type="sequence caution" evidence="2">
    <conflict type="erroneous initiation">
        <sequence resource="EMBL-CDS" id="ABP69395"/>
    </conflict>
</comment>
<evidence type="ECO:0000255" key="1">
    <source>
        <dbReference type="HAMAP-Rule" id="MF_00244"/>
    </source>
</evidence>
<evidence type="ECO:0000305" key="2"/>
<gene>
    <name evidence="1" type="primary">nadD</name>
    <name type="ordered locus">Rsph17025_0489</name>
</gene>
<keyword id="KW-0067">ATP-binding</keyword>
<keyword id="KW-0520">NAD</keyword>
<keyword id="KW-0547">Nucleotide-binding</keyword>
<keyword id="KW-0548">Nucleotidyltransferase</keyword>
<keyword id="KW-0662">Pyridine nucleotide biosynthesis</keyword>
<keyword id="KW-0808">Transferase</keyword>
<proteinExistence type="inferred from homology"/>
<reference key="1">
    <citation type="submission" date="2007-04" db="EMBL/GenBank/DDBJ databases">
        <title>Complete sequence of chromosome of Rhodobacter sphaeroides ATCC 17025.</title>
        <authorList>
            <consortium name="US DOE Joint Genome Institute"/>
            <person name="Copeland A."/>
            <person name="Lucas S."/>
            <person name="Lapidus A."/>
            <person name="Barry K."/>
            <person name="Detter J.C."/>
            <person name="Glavina del Rio T."/>
            <person name="Hammon N."/>
            <person name="Israni S."/>
            <person name="Dalin E."/>
            <person name="Tice H."/>
            <person name="Pitluck S."/>
            <person name="Chertkov O."/>
            <person name="Brettin T."/>
            <person name="Bruce D."/>
            <person name="Han C."/>
            <person name="Schmutz J."/>
            <person name="Larimer F."/>
            <person name="Land M."/>
            <person name="Hauser L."/>
            <person name="Kyrpides N."/>
            <person name="Kim E."/>
            <person name="Richardson P."/>
            <person name="Mackenzie C."/>
            <person name="Choudhary M."/>
            <person name="Donohue T.J."/>
            <person name="Kaplan S."/>
        </authorList>
    </citation>
    <scope>NUCLEOTIDE SEQUENCE [LARGE SCALE GENOMIC DNA]</scope>
    <source>
        <strain>ATCC 17025 / ATH 2.4.3</strain>
    </source>
</reference>
<dbReference type="EC" id="2.7.7.18" evidence="1"/>
<dbReference type="EMBL" id="CP000661">
    <property type="protein sequence ID" value="ABP69395.1"/>
    <property type="status" value="ALT_INIT"/>
    <property type="molecule type" value="Genomic_DNA"/>
</dbReference>
<dbReference type="SMR" id="A4WPT1"/>
<dbReference type="STRING" id="349102.Rsph17025_0489"/>
<dbReference type="KEGG" id="rsq:Rsph17025_0489"/>
<dbReference type="eggNOG" id="COG1057">
    <property type="taxonomic scope" value="Bacteria"/>
</dbReference>
<dbReference type="HOGENOM" id="CLU_069765_2_0_5"/>
<dbReference type="UniPathway" id="UPA00253">
    <property type="reaction ID" value="UER00332"/>
</dbReference>
<dbReference type="GO" id="GO:0005524">
    <property type="term" value="F:ATP binding"/>
    <property type="evidence" value="ECO:0007669"/>
    <property type="project" value="UniProtKB-KW"/>
</dbReference>
<dbReference type="GO" id="GO:0004515">
    <property type="term" value="F:nicotinate-nucleotide adenylyltransferase activity"/>
    <property type="evidence" value="ECO:0007669"/>
    <property type="project" value="UniProtKB-UniRule"/>
</dbReference>
<dbReference type="GO" id="GO:0009435">
    <property type="term" value="P:NAD biosynthetic process"/>
    <property type="evidence" value="ECO:0007669"/>
    <property type="project" value="UniProtKB-UniRule"/>
</dbReference>
<dbReference type="CDD" id="cd02165">
    <property type="entry name" value="NMNAT"/>
    <property type="match status" value="1"/>
</dbReference>
<dbReference type="Gene3D" id="3.40.50.620">
    <property type="entry name" value="HUPs"/>
    <property type="match status" value="1"/>
</dbReference>
<dbReference type="HAMAP" id="MF_00244">
    <property type="entry name" value="NaMN_adenylyltr"/>
    <property type="match status" value="1"/>
</dbReference>
<dbReference type="InterPro" id="IPR004821">
    <property type="entry name" value="Cyt_trans-like"/>
</dbReference>
<dbReference type="InterPro" id="IPR005248">
    <property type="entry name" value="NadD/NMNAT"/>
</dbReference>
<dbReference type="InterPro" id="IPR014729">
    <property type="entry name" value="Rossmann-like_a/b/a_fold"/>
</dbReference>
<dbReference type="NCBIfam" id="TIGR00482">
    <property type="entry name" value="nicotinate (nicotinamide) nucleotide adenylyltransferase"/>
    <property type="match status" value="1"/>
</dbReference>
<dbReference type="NCBIfam" id="NF000843">
    <property type="entry name" value="PRK00071.2-2"/>
    <property type="match status" value="1"/>
</dbReference>
<dbReference type="PANTHER" id="PTHR39321">
    <property type="entry name" value="NICOTINATE-NUCLEOTIDE ADENYLYLTRANSFERASE-RELATED"/>
    <property type="match status" value="1"/>
</dbReference>
<dbReference type="PANTHER" id="PTHR39321:SF3">
    <property type="entry name" value="PHOSPHOPANTETHEINE ADENYLYLTRANSFERASE"/>
    <property type="match status" value="1"/>
</dbReference>
<dbReference type="Pfam" id="PF01467">
    <property type="entry name" value="CTP_transf_like"/>
    <property type="match status" value="1"/>
</dbReference>
<dbReference type="SUPFAM" id="SSF52374">
    <property type="entry name" value="Nucleotidylyl transferase"/>
    <property type="match status" value="1"/>
</dbReference>
<feature type="chain" id="PRO_0000336728" description="Probable nicotinate-nucleotide adenylyltransferase">
    <location>
        <begin position="1"/>
        <end position="185"/>
    </location>
</feature>
<accession>A4WPT1</accession>